<keyword id="KW-0210">Decarboxylase</keyword>
<keyword id="KW-0456">Lyase</keyword>
<keyword id="KW-0576">Peroxisome</keyword>
<keyword id="KW-0659">Purine metabolism</keyword>
<keyword id="KW-1185">Reference proteome</keyword>
<evidence type="ECO:0000255" key="1"/>
<evidence type="ECO:0000305" key="2"/>
<evidence type="ECO:0000305" key="3">
    <source>
    </source>
</evidence>
<dbReference type="EC" id="4.1.1.97"/>
<dbReference type="EMBL" id="AL591024">
    <property type="status" value="NOT_ANNOTATED_CDS"/>
    <property type="molecule type" value="Genomic_DNA"/>
</dbReference>
<dbReference type="CCDS" id="CCDS45020.1"/>
<dbReference type="RefSeq" id="NP_001099047.1">
    <property type="nucleotide sequence ID" value="NM_001105577.2"/>
</dbReference>
<dbReference type="SMR" id="A6NGE7"/>
<dbReference type="BioGRID" id="571472">
    <property type="interactions" value="1"/>
</dbReference>
<dbReference type="FunCoup" id="A6NGE7">
    <property type="interactions" value="125"/>
</dbReference>
<dbReference type="IntAct" id="A6NGE7">
    <property type="interactions" value="1"/>
</dbReference>
<dbReference type="STRING" id="9606.ENSP00000333490"/>
<dbReference type="iPTMnet" id="A6NGE7"/>
<dbReference type="PhosphoSitePlus" id="A6NGE7"/>
<dbReference type="BioMuta" id="URAD"/>
<dbReference type="MassIVE" id="A6NGE7"/>
<dbReference type="PaxDb" id="9606-ENSP00000333490"/>
<dbReference type="PeptideAtlas" id="A6NGE7"/>
<dbReference type="Antibodypedia" id="48958">
    <property type="antibodies" value="9 antibodies from 7 providers"/>
</dbReference>
<dbReference type="DNASU" id="646625"/>
<dbReference type="Ensembl" id="ENST00000332715.6">
    <property type="protein sequence ID" value="ENSP00000333490.4"/>
    <property type="gene ID" value="ENSG00000183463.7"/>
</dbReference>
<dbReference type="GeneID" id="646625"/>
<dbReference type="KEGG" id="hsa:646625"/>
<dbReference type="MANE-Select" id="ENST00000332715.6">
    <property type="protein sequence ID" value="ENSP00000333490.4"/>
    <property type="RefSeq nucleotide sequence ID" value="NM_001105577.2"/>
    <property type="RefSeq protein sequence ID" value="NP_001099047.1"/>
</dbReference>
<dbReference type="UCSC" id="uc010aan.2">
    <property type="organism name" value="human"/>
</dbReference>
<dbReference type="AGR" id="HGNC:17785"/>
<dbReference type="CTD" id="646625"/>
<dbReference type="DisGeNET" id="646625"/>
<dbReference type="GeneCards" id="URAD"/>
<dbReference type="HGNC" id="HGNC:17785">
    <property type="gene designation" value="URAD"/>
</dbReference>
<dbReference type="HPA" id="ENSG00000183463">
    <property type="expression patterns" value="Tissue enriched (intestine)"/>
</dbReference>
<dbReference type="MIM" id="615804">
    <property type="type" value="gene"/>
</dbReference>
<dbReference type="neXtProt" id="NX_A6NGE7"/>
<dbReference type="PharmGKB" id="PA142671135"/>
<dbReference type="VEuPathDB" id="HostDB:ENSG00000183463"/>
<dbReference type="eggNOG" id="KOG0848">
    <property type="taxonomic scope" value="Eukaryota"/>
</dbReference>
<dbReference type="GeneTree" id="ENSGT00940000153229"/>
<dbReference type="HOGENOM" id="CLU_092522_1_1_1"/>
<dbReference type="InParanoid" id="A6NGE7"/>
<dbReference type="OMA" id="RCQNERA"/>
<dbReference type="OrthoDB" id="9970124at2759"/>
<dbReference type="PAN-GO" id="A6NGE7">
    <property type="GO annotations" value="0 GO annotations based on evolutionary models"/>
</dbReference>
<dbReference type="PhylomeDB" id="A6NGE7"/>
<dbReference type="TreeFam" id="TF323276"/>
<dbReference type="PathwayCommons" id="A6NGE7"/>
<dbReference type="SignaLink" id="A6NGE7"/>
<dbReference type="UniPathway" id="UPA00394">
    <property type="reaction ID" value="UER00652"/>
</dbReference>
<dbReference type="BioGRID-ORCS" id="646625">
    <property type="hits" value="12 hits in 1087 CRISPR screens"/>
</dbReference>
<dbReference type="GenomeRNAi" id="646625"/>
<dbReference type="Pharos" id="A6NGE7">
    <property type="development level" value="Tdark"/>
</dbReference>
<dbReference type="PRO" id="PR:A6NGE7"/>
<dbReference type="Proteomes" id="UP000005640">
    <property type="component" value="Chromosome 13"/>
</dbReference>
<dbReference type="RNAct" id="A6NGE7">
    <property type="molecule type" value="protein"/>
</dbReference>
<dbReference type="Bgee" id="ENSG00000183463">
    <property type="expression patterns" value="Expressed in mucosa of transverse colon and 28 other cell types or tissues"/>
</dbReference>
<dbReference type="GO" id="GO:0005777">
    <property type="term" value="C:peroxisome"/>
    <property type="evidence" value="ECO:0007669"/>
    <property type="project" value="UniProtKB-SubCell"/>
</dbReference>
<dbReference type="GO" id="GO:0016831">
    <property type="term" value="F:carboxy-lyase activity"/>
    <property type="evidence" value="ECO:0000250"/>
    <property type="project" value="UniProtKB"/>
</dbReference>
<dbReference type="GO" id="GO:0000255">
    <property type="term" value="P:allantoin metabolic process"/>
    <property type="evidence" value="ECO:0007669"/>
    <property type="project" value="InterPro"/>
</dbReference>
<dbReference type="GO" id="GO:0006144">
    <property type="term" value="P:purine nucleobase metabolic process"/>
    <property type="evidence" value="ECO:0007669"/>
    <property type="project" value="UniProtKB-KW"/>
</dbReference>
<dbReference type="FunFam" id="1.10.3330.10:FF:000001">
    <property type="entry name" value="2-oxo-4-hydroxy-4-carboxy-5-ureidoimidazoline decarboxylase"/>
    <property type="match status" value="1"/>
</dbReference>
<dbReference type="Gene3D" id="1.10.3330.10">
    <property type="entry name" value="Oxo-4-hydroxy-4-carboxy-5-ureidoimidazoline decarboxylase"/>
    <property type="match status" value="1"/>
</dbReference>
<dbReference type="InterPro" id="IPR018020">
    <property type="entry name" value="OHCU_decarboxylase"/>
</dbReference>
<dbReference type="InterPro" id="IPR017580">
    <property type="entry name" value="OHCU_decarboxylase-1"/>
</dbReference>
<dbReference type="InterPro" id="IPR036778">
    <property type="entry name" value="OHCU_decarboxylase_sf"/>
</dbReference>
<dbReference type="NCBIfam" id="TIGR03164">
    <property type="entry name" value="UHCUDC"/>
    <property type="match status" value="1"/>
</dbReference>
<dbReference type="PANTHER" id="PTHR43466">
    <property type="entry name" value="2-OXO-4-HYDROXY-4-CARBOXY-5-UREIDOIMIDAZOLINE DECARBOXYLASE-RELATED"/>
    <property type="match status" value="1"/>
</dbReference>
<dbReference type="PANTHER" id="PTHR43466:SF1">
    <property type="entry name" value="2-OXO-4-HYDROXY-4-CARBOXY-5-UREIDOIMIDAZOLINE DECARBOXYLASE-RELATED"/>
    <property type="match status" value="1"/>
</dbReference>
<dbReference type="Pfam" id="PF09349">
    <property type="entry name" value="OHCU_decarbox"/>
    <property type="match status" value="1"/>
</dbReference>
<dbReference type="SUPFAM" id="SSF158694">
    <property type="entry name" value="UraD-Like"/>
    <property type="match status" value="1"/>
</dbReference>
<sequence length="173" mass="19130">MDIEKVNSMDLGEFVDVFGNATERCPLIAAAVWSQRPFSDLEDLEKHFFAFIDALAQSGQEGILRCHPDLAGSELQRGTLTAESQREQSGAGLRSLGADERLRLAELNAQYRARFGFPFVLAARFSDRTAVPRELARRLLCPSAQELRTALGEVKKIGSLRLADLLRADPAKL</sequence>
<reference key="1">
    <citation type="journal article" date="2004" name="Nature">
        <title>The DNA sequence and analysis of human chromosome 13.</title>
        <authorList>
            <person name="Dunham A."/>
            <person name="Matthews L.H."/>
            <person name="Burton J."/>
            <person name="Ashurst J.L."/>
            <person name="Howe K.L."/>
            <person name="Ashcroft K.J."/>
            <person name="Beare D.M."/>
            <person name="Burford D.C."/>
            <person name="Hunt S.E."/>
            <person name="Griffiths-Jones S."/>
            <person name="Jones M.C."/>
            <person name="Keenan S.J."/>
            <person name="Oliver K."/>
            <person name="Scott C.E."/>
            <person name="Ainscough R."/>
            <person name="Almeida J.P."/>
            <person name="Ambrose K.D."/>
            <person name="Andrews D.T."/>
            <person name="Ashwell R.I.S."/>
            <person name="Babbage A.K."/>
            <person name="Bagguley C.L."/>
            <person name="Bailey J."/>
            <person name="Bannerjee R."/>
            <person name="Barlow K.F."/>
            <person name="Bates K."/>
            <person name="Beasley H."/>
            <person name="Bird C.P."/>
            <person name="Bray-Allen S."/>
            <person name="Brown A.J."/>
            <person name="Brown J.Y."/>
            <person name="Burrill W."/>
            <person name="Carder C."/>
            <person name="Carter N.P."/>
            <person name="Chapman J.C."/>
            <person name="Clamp M.E."/>
            <person name="Clark S.Y."/>
            <person name="Clarke G."/>
            <person name="Clee C.M."/>
            <person name="Clegg S.C."/>
            <person name="Cobley V."/>
            <person name="Collins J.E."/>
            <person name="Corby N."/>
            <person name="Coville G.J."/>
            <person name="Deloukas P."/>
            <person name="Dhami P."/>
            <person name="Dunham I."/>
            <person name="Dunn M."/>
            <person name="Earthrowl M.E."/>
            <person name="Ellington A.G."/>
            <person name="Faulkner L."/>
            <person name="Frankish A.G."/>
            <person name="Frankland J."/>
            <person name="French L."/>
            <person name="Garner P."/>
            <person name="Garnett J."/>
            <person name="Gilbert J.G.R."/>
            <person name="Gilson C.J."/>
            <person name="Ghori J."/>
            <person name="Grafham D.V."/>
            <person name="Gribble S.M."/>
            <person name="Griffiths C."/>
            <person name="Hall R.E."/>
            <person name="Hammond S."/>
            <person name="Harley J.L."/>
            <person name="Hart E.A."/>
            <person name="Heath P.D."/>
            <person name="Howden P.J."/>
            <person name="Huckle E.J."/>
            <person name="Hunt P.J."/>
            <person name="Hunt A.R."/>
            <person name="Johnson C."/>
            <person name="Johnson D."/>
            <person name="Kay M."/>
            <person name="Kimberley A.M."/>
            <person name="King A."/>
            <person name="Laird G.K."/>
            <person name="Langford C.J."/>
            <person name="Lawlor S."/>
            <person name="Leongamornlert D.A."/>
            <person name="Lloyd D.M."/>
            <person name="Lloyd C."/>
            <person name="Loveland J.E."/>
            <person name="Lovell J."/>
            <person name="Martin S."/>
            <person name="Mashreghi-Mohammadi M."/>
            <person name="McLaren S.J."/>
            <person name="McMurray A."/>
            <person name="Milne S."/>
            <person name="Moore M.J.F."/>
            <person name="Nickerson T."/>
            <person name="Palmer S.A."/>
            <person name="Pearce A.V."/>
            <person name="Peck A.I."/>
            <person name="Pelan S."/>
            <person name="Phillimore B."/>
            <person name="Porter K.M."/>
            <person name="Rice C.M."/>
            <person name="Searle S."/>
            <person name="Sehra H.K."/>
            <person name="Shownkeen R."/>
            <person name="Skuce C.D."/>
            <person name="Smith M."/>
            <person name="Steward C.A."/>
            <person name="Sycamore N."/>
            <person name="Tester J."/>
            <person name="Thomas D.W."/>
            <person name="Tracey A."/>
            <person name="Tromans A."/>
            <person name="Tubby B."/>
            <person name="Wall M."/>
            <person name="Wallis J.M."/>
            <person name="West A.P."/>
            <person name="Whitehead S.L."/>
            <person name="Willey D.L."/>
            <person name="Wilming L."/>
            <person name="Wray P.W."/>
            <person name="Wright M.W."/>
            <person name="Young L."/>
            <person name="Coulson A."/>
            <person name="Durbin R.M."/>
            <person name="Hubbard T."/>
            <person name="Sulston J.E."/>
            <person name="Beck S."/>
            <person name="Bentley D.R."/>
            <person name="Rogers J."/>
            <person name="Ross M.T."/>
        </authorList>
    </citation>
    <scope>NUCLEOTIDE SEQUENCE [LARGE SCALE GENOMIC DNA]</scope>
</reference>
<reference key="2">
    <citation type="journal article" date="2006" name="Nat. Chem. Biol.">
        <title>Completing the uric acid degradation pathway through phylogenetic comparison of whole genomes.</title>
        <authorList>
            <person name="Ramazzina I."/>
            <person name="Folli C."/>
            <person name="Secchi A."/>
            <person name="Berni R."/>
            <person name="Percudani R."/>
        </authorList>
    </citation>
    <scope>LACK OF TISSUE SPECIFICITY</scope>
</reference>
<name>URAD_HUMAN</name>
<feature type="chain" id="PRO_0000315240" description="Putative 2-oxo-4-hydroxy-4-carboxy-5-ureidoimidazoline decarboxylase">
    <location>
        <begin position="1"/>
        <end position="173"/>
    </location>
</feature>
<feature type="short sequence motif" description="Microbody targeting signal" evidence="1">
    <location>
        <begin position="171"/>
        <end position="173"/>
    </location>
</feature>
<feature type="active site" description="Proton donor" evidence="1">
    <location>
        <position position="67"/>
    </location>
</feature>
<feature type="binding site" evidence="1">
    <location>
        <position position="68"/>
    </location>
    <ligand>
        <name>substrate</name>
    </ligand>
</feature>
<feature type="binding site" evidence="1">
    <location>
        <begin position="84"/>
        <end position="88"/>
    </location>
    <ligand>
        <name>substrate</name>
    </ligand>
</feature>
<feature type="binding site" evidence="1">
    <location>
        <begin position="119"/>
        <end position="123"/>
    </location>
    <ligand>
        <name>substrate</name>
    </ligand>
</feature>
<feature type="sequence variant" id="VAR_053987" description="In dbSNP:rs3897926.">
    <original>Q</original>
    <variation>P</variation>
    <location>
        <position position="57"/>
    </location>
</feature>
<protein>
    <recommendedName>
        <fullName>Putative 2-oxo-4-hydroxy-4-carboxy-5-ureidoimidazoline decarboxylase</fullName>
        <shortName>OHCU decarboxylase</shortName>
        <ecNumber>4.1.1.97</ecNumber>
    </recommendedName>
    <alternativeName>
        <fullName>Parahox neighbor</fullName>
    </alternativeName>
    <alternativeName>
        <fullName>Ureidoimidazoline (2-oxo-4-hydroxy-4-carboxy-5-) decarboxylase</fullName>
    </alternativeName>
</protein>
<organism>
    <name type="scientific">Homo sapiens</name>
    <name type="common">Human</name>
    <dbReference type="NCBI Taxonomy" id="9606"/>
    <lineage>
        <taxon>Eukaryota</taxon>
        <taxon>Metazoa</taxon>
        <taxon>Chordata</taxon>
        <taxon>Craniata</taxon>
        <taxon>Vertebrata</taxon>
        <taxon>Euteleostomi</taxon>
        <taxon>Mammalia</taxon>
        <taxon>Eutheria</taxon>
        <taxon>Euarchontoglires</taxon>
        <taxon>Primates</taxon>
        <taxon>Haplorrhini</taxon>
        <taxon>Catarrhini</taxon>
        <taxon>Hominidae</taxon>
        <taxon>Homo</taxon>
    </lineage>
</organism>
<proteinExistence type="uncertain"/>
<accession>A6NGE7</accession>
<gene>
    <name type="primary">URAD</name>
    <name type="synonym">PRHOXNB</name>
</gene>
<comment type="function">
    <text evidence="2">Catalyzes the stereoselective decarboxylation of 2-oxo-4-hydroxy-4-carboxy-5-ureidoimidazoline (OHCU) to (S)-allantoin.</text>
</comment>
<comment type="catalytic activity">
    <reaction>
        <text>5-hydroxy-2-oxo-4-ureido-2,5-dihydro-1H-imidazole-5-carboxylate + H(+) = (S)-allantoin + CO2</text>
        <dbReference type="Rhea" id="RHEA:26301"/>
        <dbReference type="ChEBI" id="CHEBI:15378"/>
        <dbReference type="ChEBI" id="CHEBI:15678"/>
        <dbReference type="ChEBI" id="CHEBI:16526"/>
        <dbReference type="ChEBI" id="CHEBI:58639"/>
        <dbReference type="EC" id="4.1.1.97"/>
    </reaction>
</comment>
<comment type="pathway">
    <text>Purine metabolism; urate degradation; (S)-allantoin from urate: step 3/3.</text>
</comment>
<comment type="subcellular location">
    <subcellularLocation>
        <location evidence="2">Peroxisome</location>
    </subcellularLocation>
</comment>
<comment type="tissue specificity">
    <text>Apparently not expressed.</text>
</comment>
<comment type="similarity">
    <text evidence="2">Belongs to the OHCU decarboxylase family.</text>
</comment>
<comment type="caution">
    <text evidence="3">Could be the product of a pseudogene. In primates the genes coding for the enzymes for the degradation of uric acid were inactivated and converted to pseudogenes (PubMed:16462750).</text>
</comment>